<dbReference type="EC" id="2.7.1.197" evidence="5 18"/>
<dbReference type="EMBL" id="V01503">
    <property type="protein sequence ID" value="CAA24748.1"/>
    <property type="molecule type" value="Genomic_DNA"/>
</dbReference>
<dbReference type="EMBL" id="U00039">
    <property type="protein sequence ID" value="AAB18576.1"/>
    <property type="molecule type" value="Genomic_DNA"/>
</dbReference>
<dbReference type="EMBL" id="U00096">
    <property type="protein sequence ID" value="AAC76623.1"/>
    <property type="molecule type" value="Genomic_DNA"/>
</dbReference>
<dbReference type="EMBL" id="AP009048">
    <property type="protein sequence ID" value="BAE77694.1"/>
    <property type="molecule type" value="Genomic_DNA"/>
</dbReference>
<dbReference type="EMBL" id="X06794">
    <property type="protein sequence ID" value="CAA29953.1"/>
    <property type="molecule type" value="Genomic_DNA"/>
</dbReference>
<dbReference type="PIR" id="A00661">
    <property type="entry name" value="WQEC2M"/>
</dbReference>
<dbReference type="RefSeq" id="NP_418056.1">
    <property type="nucleotide sequence ID" value="NC_000913.3"/>
</dbReference>
<dbReference type="RefSeq" id="WP_000093247.1">
    <property type="nucleotide sequence ID" value="NZ_SSZK01000022.1"/>
</dbReference>
<dbReference type="PDB" id="1A3A">
    <property type="method" value="X-ray"/>
    <property type="resolution" value="1.80 A"/>
    <property type="chains" value="A/B/C/D=491-637"/>
</dbReference>
<dbReference type="PDB" id="1J6T">
    <property type="method" value="NMR"/>
    <property type="chains" value="A=491-637"/>
</dbReference>
<dbReference type="PDB" id="1VKR">
    <property type="method" value="NMR"/>
    <property type="chains" value="A=367-489"/>
</dbReference>
<dbReference type="PDB" id="1VRV">
    <property type="method" value="NMR"/>
    <property type="chains" value="A=375-475"/>
</dbReference>
<dbReference type="PDB" id="2FEW">
    <property type="method" value="NMR"/>
    <property type="chains" value="A=491-637, B=375-475"/>
</dbReference>
<dbReference type="PDBsum" id="1A3A"/>
<dbReference type="PDBsum" id="1J6T"/>
<dbReference type="PDBsum" id="1VKR"/>
<dbReference type="PDBsum" id="1VRV"/>
<dbReference type="PDBsum" id="2FEW"/>
<dbReference type="BMRB" id="P00550"/>
<dbReference type="SMR" id="P00550"/>
<dbReference type="BioGRID" id="4260741">
    <property type="interactions" value="19"/>
</dbReference>
<dbReference type="DIP" id="DIP-10267N"/>
<dbReference type="FunCoup" id="P00550">
    <property type="interactions" value="144"/>
</dbReference>
<dbReference type="IntAct" id="P00550">
    <property type="interactions" value="3"/>
</dbReference>
<dbReference type="MINT" id="P00550"/>
<dbReference type="STRING" id="511145.b3599"/>
<dbReference type="TCDB" id="4.A.2.1.2">
    <property type="family name" value="the pts fructose-mannitol (fru) family"/>
</dbReference>
<dbReference type="iPTMnet" id="P00550"/>
<dbReference type="jPOST" id="P00550"/>
<dbReference type="PaxDb" id="511145-b3599"/>
<dbReference type="EnsemblBacteria" id="AAC76623">
    <property type="protein sequence ID" value="AAC76623"/>
    <property type="gene ID" value="b3599"/>
</dbReference>
<dbReference type="GeneID" id="948118"/>
<dbReference type="KEGG" id="ecj:JW3573"/>
<dbReference type="KEGG" id="eco:b3599"/>
<dbReference type="KEGG" id="ecoc:C3026_19515"/>
<dbReference type="PATRIC" id="fig|1411691.4.peg.3108"/>
<dbReference type="EchoBASE" id="EB0610"/>
<dbReference type="eggNOG" id="COG2213">
    <property type="taxonomic scope" value="Bacteria"/>
</dbReference>
<dbReference type="eggNOG" id="COG4668">
    <property type="taxonomic scope" value="Bacteria"/>
</dbReference>
<dbReference type="HOGENOM" id="CLU_028721_1_0_6"/>
<dbReference type="InParanoid" id="P00550"/>
<dbReference type="OMA" id="GWAIKRF"/>
<dbReference type="OrthoDB" id="9814222at2"/>
<dbReference type="PhylomeDB" id="P00550"/>
<dbReference type="BioCyc" id="EcoCyc:MTLA-MONOMER"/>
<dbReference type="BioCyc" id="MetaCyc:MTLA-MONOMER"/>
<dbReference type="BRENDA" id="2.7.1.197">
    <property type="organism ID" value="2026"/>
</dbReference>
<dbReference type="SABIO-RK" id="P00550"/>
<dbReference type="EvolutionaryTrace" id="P00550"/>
<dbReference type="PRO" id="PR:P00550"/>
<dbReference type="Proteomes" id="UP000000625">
    <property type="component" value="Chromosome"/>
</dbReference>
<dbReference type="GO" id="GO:0005886">
    <property type="term" value="C:plasma membrane"/>
    <property type="evidence" value="ECO:0000314"/>
    <property type="project" value="EcoCyc"/>
</dbReference>
<dbReference type="GO" id="GO:0016301">
    <property type="term" value="F:kinase activity"/>
    <property type="evidence" value="ECO:0007669"/>
    <property type="project" value="UniProtKB-KW"/>
</dbReference>
<dbReference type="GO" id="GO:0022872">
    <property type="term" value="F:protein-N(PI)-phosphohistidine-mannitol phosphotransferase system transmembrane transporter activity"/>
    <property type="evidence" value="ECO:0007669"/>
    <property type="project" value="InterPro"/>
</dbReference>
<dbReference type="GO" id="GO:0090565">
    <property type="term" value="F:protein-phosphocysteine-mannitol phosphotransferase system transporter activity"/>
    <property type="evidence" value="ECO:0000314"/>
    <property type="project" value="EcoCyc"/>
</dbReference>
<dbReference type="GO" id="GO:0090563">
    <property type="term" value="F:protein-phosphocysteine-sugar phosphotransferase activity"/>
    <property type="evidence" value="ECO:0000318"/>
    <property type="project" value="GO_Central"/>
</dbReference>
<dbReference type="GO" id="GO:0015797">
    <property type="term" value="P:mannitol transmembrane transport"/>
    <property type="evidence" value="ECO:0000314"/>
    <property type="project" value="EcoCyc"/>
</dbReference>
<dbReference type="GO" id="GO:0009401">
    <property type="term" value="P:phosphoenolpyruvate-dependent sugar phosphotransferase system"/>
    <property type="evidence" value="ECO:0000314"/>
    <property type="project" value="EcoCyc"/>
</dbReference>
<dbReference type="GO" id="GO:0015795">
    <property type="term" value="P:sorbitol transmembrane transport"/>
    <property type="evidence" value="ECO:0000269"/>
    <property type="project" value="EcoCyc"/>
</dbReference>
<dbReference type="CDD" id="cd00211">
    <property type="entry name" value="PTS_IIA_fru"/>
    <property type="match status" value="1"/>
</dbReference>
<dbReference type="CDD" id="cd05567">
    <property type="entry name" value="PTS_IIB_mannitol"/>
    <property type="match status" value="1"/>
</dbReference>
<dbReference type="FunFam" id="3.40.50.2300:FF:000047">
    <property type="entry name" value="PTS system mannitol-specific transporter subunit IICBA"/>
    <property type="match status" value="1"/>
</dbReference>
<dbReference type="FunFam" id="3.40.930.10:FF:000007">
    <property type="entry name" value="PTS system mannitol-specific transporter subunit IICBA"/>
    <property type="match status" value="1"/>
</dbReference>
<dbReference type="Gene3D" id="3.40.50.2300">
    <property type="match status" value="1"/>
</dbReference>
<dbReference type="Gene3D" id="3.40.930.10">
    <property type="entry name" value="Mannitol-specific EII, Chain A"/>
    <property type="match status" value="1"/>
</dbReference>
<dbReference type="InterPro" id="IPR016152">
    <property type="entry name" value="PTrfase/Anion_transptr"/>
</dbReference>
<dbReference type="InterPro" id="IPR002178">
    <property type="entry name" value="PTS_EIIA_type-2_dom"/>
</dbReference>
<dbReference type="InterPro" id="IPR036095">
    <property type="entry name" value="PTS_EIIB-like_sf"/>
</dbReference>
<dbReference type="InterPro" id="IPR013011">
    <property type="entry name" value="PTS_EIIB_2"/>
</dbReference>
<dbReference type="InterPro" id="IPR003501">
    <property type="entry name" value="PTS_EIIB_2/3"/>
</dbReference>
<dbReference type="InterPro" id="IPR029503">
    <property type="entry name" value="PTS_EIIB_mannitol"/>
</dbReference>
<dbReference type="InterPro" id="IPR003352">
    <property type="entry name" value="PTS_EIIC"/>
</dbReference>
<dbReference type="InterPro" id="IPR013014">
    <property type="entry name" value="PTS_EIIC_2"/>
</dbReference>
<dbReference type="InterPro" id="IPR004718">
    <property type="entry name" value="PTS_IIC_mtl"/>
</dbReference>
<dbReference type="InterPro" id="IPR050893">
    <property type="entry name" value="Sugar_PTS"/>
</dbReference>
<dbReference type="NCBIfam" id="TIGR00851">
    <property type="entry name" value="mtlA"/>
    <property type="match status" value="1"/>
</dbReference>
<dbReference type="NCBIfam" id="NF011663">
    <property type="entry name" value="PRK15083.1"/>
    <property type="match status" value="1"/>
</dbReference>
<dbReference type="PANTHER" id="PTHR30181">
    <property type="entry name" value="MANNITOL PERMEASE IIC COMPONENT"/>
    <property type="match status" value="1"/>
</dbReference>
<dbReference type="PANTHER" id="PTHR30181:SF2">
    <property type="entry name" value="PTS SYSTEM MANNITOL-SPECIFIC EIICBA COMPONENT"/>
    <property type="match status" value="1"/>
</dbReference>
<dbReference type="Pfam" id="PF00359">
    <property type="entry name" value="PTS_EIIA_2"/>
    <property type="match status" value="1"/>
</dbReference>
<dbReference type="Pfam" id="PF02378">
    <property type="entry name" value="PTS_EIIC"/>
    <property type="match status" value="1"/>
</dbReference>
<dbReference type="Pfam" id="PF02302">
    <property type="entry name" value="PTS_IIB"/>
    <property type="match status" value="1"/>
</dbReference>
<dbReference type="SUPFAM" id="SSF55804">
    <property type="entry name" value="Phoshotransferase/anion transport protein"/>
    <property type="match status" value="1"/>
</dbReference>
<dbReference type="SUPFAM" id="SSF52794">
    <property type="entry name" value="PTS system IIB component-like"/>
    <property type="match status" value="1"/>
</dbReference>
<dbReference type="PROSITE" id="PS51094">
    <property type="entry name" value="PTS_EIIA_TYPE_2"/>
    <property type="match status" value="1"/>
</dbReference>
<dbReference type="PROSITE" id="PS00372">
    <property type="entry name" value="PTS_EIIA_TYPE_2_HIS"/>
    <property type="match status" value="1"/>
</dbReference>
<dbReference type="PROSITE" id="PS51099">
    <property type="entry name" value="PTS_EIIB_TYPE_2"/>
    <property type="match status" value="1"/>
</dbReference>
<dbReference type="PROSITE" id="PS51104">
    <property type="entry name" value="PTS_EIIC_TYPE_2"/>
    <property type="match status" value="1"/>
</dbReference>
<protein>
    <recommendedName>
        <fullName evidence="12">PTS system mannitol-specific EIICBA component</fullName>
    </recommendedName>
    <alternativeName>
        <fullName evidence="12">EIICBA-Mtl</fullName>
        <shortName evidence="12">EII-Mtl</shortName>
    </alternativeName>
    <domain>
        <recommendedName>
            <fullName evidence="12">Mannitol permease IIC component</fullName>
        </recommendedName>
        <alternativeName>
            <fullName evidence="12">PTS system mannitol-specific EIIC component</fullName>
        </alternativeName>
    </domain>
    <domain>
        <recommendedName>
            <fullName evidence="12">Mannitol-specific phosphotransferase enzyme IIB component</fullName>
            <ecNumber evidence="5 18">2.7.1.197</ecNumber>
        </recommendedName>
        <alternativeName>
            <fullName evidence="12">PTS system mannitol-specific EIIB component</fullName>
        </alternativeName>
    </domain>
    <domain>
        <recommendedName>
            <fullName evidence="12">Mannitol-specific phosphotransferase enzyme IIA component</fullName>
        </recommendedName>
        <alternativeName>
            <fullName evidence="12">PTS system mannitol-specific EIIA component</fullName>
        </alternativeName>
    </domain>
</protein>
<reference key="1">
    <citation type="journal article" date="1983" name="J. Biol. Chem.">
        <title>Mannitol-specific enzyme II of the bacterial phosphotransferase system. III. The nucleotide sequence of the permease gene.</title>
        <authorList>
            <person name="Lee C.A."/>
            <person name="Saier M.H. Jr."/>
        </authorList>
    </citation>
    <scope>NUCLEOTIDE SEQUENCE [GENOMIC DNA]</scope>
    <scope>SUBCELLULAR LOCATION</scope>
</reference>
<reference key="2">
    <citation type="journal article" date="1994" name="Nucleic Acids Res.">
        <title>Analysis of the Escherichia coli genome. V. DNA sequence of the region from 76.0 to 81.5 minutes.</title>
        <authorList>
            <person name="Sofia H.J."/>
            <person name="Burland V."/>
            <person name="Daniels D.L."/>
            <person name="Plunkett G. III"/>
            <person name="Blattner F.R."/>
        </authorList>
    </citation>
    <scope>NUCLEOTIDE SEQUENCE [LARGE SCALE GENOMIC DNA]</scope>
    <source>
        <strain>K12 / MG1655 / ATCC 47076</strain>
    </source>
</reference>
<reference key="3">
    <citation type="journal article" date="1997" name="Science">
        <title>The complete genome sequence of Escherichia coli K-12.</title>
        <authorList>
            <person name="Blattner F.R."/>
            <person name="Plunkett G. III"/>
            <person name="Bloch C.A."/>
            <person name="Perna N.T."/>
            <person name="Burland V."/>
            <person name="Riley M."/>
            <person name="Collado-Vides J."/>
            <person name="Glasner J.D."/>
            <person name="Rode C.K."/>
            <person name="Mayhew G.F."/>
            <person name="Gregor J."/>
            <person name="Davis N.W."/>
            <person name="Kirkpatrick H.A."/>
            <person name="Goeden M.A."/>
            <person name="Rose D.J."/>
            <person name="Mau B."/>
            <person name="Shao Y."/>
        </authorList>
    </citation>
    <scope>NUCLEOTIDE SEQUENCE [LARGE SCALE GENOMIC DNA]</scope>
    <source>
        <strain>K12 / MG1655 / ATCC 47076</strain>
    </source>
</reference>
<reference key="4">
    <citation type="journal article" date="2006" name="Mol. Syst. Biol.">
        <title>Highly accurate genome sequences of Escherichia coli K-12 strains MG1655 and W3110.</title>
        <authorList>
            <person name="Hayashi K."/>
            <person name="Morooka N."/>
            <person name="Yamamoto Y."/>
            <person name="Fujita K."/>
            <person name="Isono K."/>
            <person name="Choi S."/>
            <person name="Ohtsubo E."/>
            <person name="Baba T."/>
            <person name="Wanner B.L."/>
            <person name="Mori H."/>
            <person name="Horiuchi T."/>
        </authorList>
    </citation>
    <scope>NUCLEOTIDE SEQUENCE [LARGE SCALE GENOMIC DNA]</scope>
    <source>
        <strain>K12 / W3110 / ATCC 27325 / DSM 5911</strain>
    </source>
</reference>
<reference key="5">
    <citation type="journal article" date="1988" name="Mol. Microbiol.">
        <title>Nucleotide sequence of the mannitol (mtl) operon in Escherichia coli.</title>
        <authorList>
            <person name="Davis T."/>
            <person name="Yamada M."/>
            <person name="Elgort M."/>
            <person name="Saier M.H. Jr."/>
        </authorList>
    </citation>
    <scope>NUCLEOTIDE SEQUENCE [GENOMIC DNA] OF 619-637</scope>
    <source>
        <strain>K12</strain>
    </source>
</reference>
<reference key="6">
    <citation type="journal article" date="1979" name="J. Biol. Chem.">
        <title>Purification of the mannitol-specific enzyme II of the Escherichia coli phosphoenolpyruvate:sugar phosphotransferase system.</title>
        <authorList>
            <person name="Jacobson G.R."/>
            <person name="Lee C.A."/>
            <person name="Saier M.H. Jr."/>
        </authorList>
    </citation>
    <scope>FUNCTION</scope>
    <scope>CATALYTIC ACTIVITY</scope>
    <scope>SUBCELLULAR LOCATION</scope>
</reference>
<reference key="7">
    <citation type="journal article" date="1983" name="J. Cell. Biochem.">
        <title>Substrate and phospholipid specificity of the purified mannitol permease of Escherichia coli.</title>
        <authorList>
            <person name="Jacobson G.R."/>
            <person name="Tanney L.E."/>
            <person name="Kelly D.M."/>
            <person name="Palman K.B."/>
            <person name="Corn S.B."/>
        </authorList>
    </citation>
    <scope>FUNCTION</scope>
    <scope>SUBSTRATE SPECIFICITY</scope>
</reference>
<reference key="8">
    <citation type="journal article" date="1987" name="Biochemistry">
        <title>Bacterial phosphoenolpyruvate-dependent phosphotransferase system: association state of membrane-bound mannitol-specific enzyme II demonstrated by inactivation.</title>
        <authorList>
            <person name="Pas H.H."/>
            <person name="Ellory J.C."/>
            <person name="Robillard G.T."/>
        </authorList>
    </citation>
    <scope>SUBUNIT</scope>
</reference>
<reference key="9">
    <citation type="journal article" date="1988" name="Biochemistry">
        <title>S-phosphocysteine and phosphohistidine are intermediates in the phosphoenolpyruvate-dependent mannitol transport catalyzed by Escherichia coli EIIMtl.</title>
        <authorList>
            <person name="Pas H.H."/>
            <person name="Robillard G.T."/>
        </authorList>
    </citation>
    <scope>PHOSPHORYLATION AT CYS-384 AND HIS-554</scope>
</reference>
<reference key="10">
    <citation type="journal article" date="1990" name="J. Bacteriol.">
        <title>Molecular cloning of the C-terminal domain of Escherichia coli D-mannitol permease: expression, phosphorylation, and complementation with C-terminal permease deletion proteins.</title>
        <authorList>
            <person name="White D.W."/>
            <person name="Jacobson G.R."/>
        </authorList>
    </citation>
    <scope>PHOSPHORYLATION AT CYS-384 AND HIS-554</scope>
</reference>
<reference key="11">
    <citation type="journal article" date="1990" name="J. Bacteriol.">
        <title>Functional reconstitution of the purified phosphoenolpyruvate-dependent mannitol-specific transport system of Escherichia coli in phospholipid vesicles: coupling between transport and phosphorylation.</title>
        <authorList>
            <person name="Elferink M.G."/>
            <person name="Driessen A.J."/>
            <person name="Robillard G.T."/>
        </authorList>
    </citation>
    <scope>FUNCTION</scope>
    <scope>CATALYTIC ACTIVITY</scope>
    <scope>BIOPHYSICOCHEMICAL PROPERTIES</scope>
</reference>
<reference key="12">
    <citation type="journal article" date="1991" name="Proc. Natl. Acad. Sci. U.S.A.">
        <title>Membrane topology analysis of Escherichia coli mannitol permease by using a nested-deletion method to create mtlA-phoA fusions.</title>
        <authorList>
            <person name="Sugiyama J.E."/>
            <person name="Mahmoodian S."/>
            <person name="Jacobson G.R."/>
        </authorList>
    </citation>
    <scope>TOPOLOGY</scope>
</reference>
<reference key="13">
    <citation type="journal article" date="1994" name="J. Bacteriol.">
        <title>The mannitol repressor (MtlR) of Escherichia coli.</title>
        <authorList>
            <person name="Figge R.M."/>
            <person name="Ramseier T.M."/>
            <person name="Saier M.H. Jr."/>
        </authorList>
    </citation>
    <scope>INDUCTION</scope>
</reference>
<reference key="14">
    <citation type="journal article" date="2005" name="Science">
        <title>Global topology analysis of the Escherichia coli inner membrane proteome.</title>
        <authorList>
            <person name="Daley D.O."/>
            <person name="Rapp M."/>
            <person name="Granseth E."/>
            <person name="Melen K."/>
            <person name="Drew D."/>
            <person name="von Heijne G."/>
        </authorList>
    </citation>
    <scope>SUBCELLULAR LOCATION</scope>
    <source>
        <strain>K12 / MG1655 / ATCC 47076</strain>
    </source>
</reference>
<reference key="15">
    <citation type="journal article" date="1998" name="Structure">
        <title>The structure of the Escherichia coli phosphotransferase IIAmannitol reveals a novel fold with two conformations of the active site.</title>
        <authorList>
            <person name="van Montfort R.L.M."/>
            <person name="Pijning T."/>
            <person name="Kalk K.H."/>
            <person name="Hangyi I."/>
            <person name="Kouwijzer M.L.C.E."/>
            <person name="Robillard G.T."/>
            <person name="Dijkstra B.W."/>
        </authorList>
    </citation>
    <scope>X-RAY CRYSTALLOGRAPHY (1.8 ANGSTROMS) OF 490-637 IN COMPLEX WITH THE HISTIDINE PHOSPHOCARRIER PROTEIN HPR</scope>
    <scope>ACTIVE SITE</scope>
</reference>
<reference key="16">
    <citation type="journal article" date="2002" name="J. Biol. Chem.">
        <title>Solution structure of the phosphoryl transfer complex between the cytoplasmic A domain of the mannitol transporter IIMannitol and HPr of the Escherichia coli phosphotransferase system.</title>
        <authorList>
            <person name="Cornilescu G."/>
            <person name="Lee B.R."/>
            <person name="Cornilescu C.C."/>
            <person name="Wang G."/>
            <person name="Peterkofsky A."/>
            <person name="Clore G.M."/>
        </authorList>
    </citation>
    <scope>STRUCTURE BY NMR OF 491-637 IN COMPLEX WITH THE HISTIDINE PHOSPHOCARRIER PROTEIN HPR</scope>
    <scope>ACTIVE SITE</scope>
</reference>
<reference key="17">
    <citation type="journal article" date="2004" name="J. Biol. Chem.">
        <title>Three-dimensional solution structure of the cytoplasmic B domain of the mannitol transporter IImannitol of the Escherichia coli phosphotransferase system.</title>
        <authorList>
            <person name="Legler P.M."/>
            <person name="Cai M."/>
            <person name="Peterkofsky A."/>
            <person name="Clore G.M."/>
        </authorList>
    </citation>
    <scope>STRUCTURE BY NMR OF 367-489</scope>
    <scope>ACTIVE SITE</scope>
</reference>
<reference key="18">
    <citation type="journal article" date="2006" name="J. Biol. Chem.">
        <title>Solution structure of a post-transition state analog of the phosphotransfer reaction between the A and B cytoplasmic domains of the mannitol transporter IIMannitol of the Escherichia coli phosphotransferase system.</title>
        <authorList>
            <person name="Suh J.Y."/>
            <person name="Cai M."/>
            <person name="Williams D.C. Jr."/>
            <person name="Clore G.M."/>
        </authorList>
    </citation>
    <scope>STRUCTURE BY NMR OF 491-637 OF MUTANT GLN-554 AND 375-475 OF MUTANT SER-384</scope>
    <scope>ACTIVE SITE</scope>
    <scope>REACTION MECHANISM</scope>
</reference>
<gene>
    <name evidence="12" type="primary">mtlA</name>
    <name type="ordered locus">b3599</name>
    <name type="ordered locus">JW3573</name>
</gene>
<proteinExistence type="evidence at protein level"/>
<evidence type="ECO:0000255" key="1">
    <source>
        <dbReference type="PROSITE-ProRule" id="PRU00417"/>
    </source>
</evidence>
<evidence type="ECO:0000255" key="2">
    <source>
        <dbReference type="PROSITE-ProRule" id="PRU00422"/>
    </source>
</evidence>
<evidence type="ECO:0000255" key="3">
    <source>
        <dbReference type="PROSITE-ProRule" id="PRU00427"/>
    </source>
</evidence>
<evidence type="ECO:0000269" key="4">
    <source>
    </source>
</evidence>
<evidence type="ECO:0000269" key="5">
    <source>
    </source>
</evidence>
<evidence type="ECO:0000269" key="6">
    <source>
    </source>
</evidence>
<evidence type="ECO:0000269" key="7">
    <source>
    </source>
</evidence>
<evidence type="ECO:0000269" key="8">
    <source>
    </source>
</evidence>
<evidence type="ECO:0000269" key="9">
    <source>
    </source>
</evidence>
<evidence type="ECO:0000269" key="10">
    <source>
    </source>
</evidence>
<evidence type="ECO:0000269" key="11">
    <source>
    </source>
</evidence>
<evidence type="ECO:0000303" key="12">
    <source>
    </source>
</evidence>
<evidence type="ECO:0000305" key="13">
    <source>
    </source>
</evidence>
<evidence type="ECO:0000305" key="14">
    <source>
    </source>
</evidence>
<evidence type="ECO:0000305" key="15">
    <source>
    </source>
</evidence>
<evidence type="ECO:0000305" key="16">
    <source>
    </source>
</evidence>
<evidence type="ECO:0000305" key="17">
    <source>
    </source>
</evidence>
<evidence type="ECO:0000305" key="18">
    <source>
    </source>
</evidence>
<evidence type="ECO:0000305" key="19">
    <source>
    </source>
</evidence>
<evidence type="ECO:0000305" key="20">
    <source>
    </source>
</evidence>
<evidence type="ECO:0007829" key="21">
    <source>
        <dbReference type="PDB" id="1A3A"/>
    </source>
</evidence>
<evidence type="ECO:0007829" key="22">
    <source>
        <dbReference type="PDB" id="1VKR"/>
    </source>
</evidence>
<name>PTM3C_ECOLI</name>
<comment type="function">
    <text evidence="5 8 9">The phosphoenolpyruvate-dependent sugar phosphotransferase system (sugar PTS), a major carbohydrate active transport system, catalyzes the phosphorylation of incoming sugar substrates concomitantly with their translocation across the cell membrane. This system is involved in D-mannitol transport (PubMed:2123863, PubMed:368051, PubMed:6427236). Also able to use D-mannonic acid (PubMed:6427236).</text>
</comment>
<comment type="catalytic activity">
    <reaction evidence="5 18">
        <text>D-mannitol(out) + N(pros)-phospho-L-histidyl-[protein] = D-mannitol 1-phosphate(in) + L-histidyl-[protein]</text>
        <dbReference type="Rhea" id="RHEA:33363"/>
        <dbReference type="Rhea" id="RHEA-COMP:9745"/>
        <dbReference type="Rhea" id="RHEA-COMP:9746"/>
        <dbReference type="ChEBI" id="CHEBI:16899"/>
        <dbReference type="ChEBI" id="CHEBI:29979"/>
        <dbReference type="ChEBI" id="CHEBI:61381"/>
        <dbReference type="ChEBI" id="CHEBI:64837"/>
        <dbReference type="EC" id="2.7.1.197"/>
    </reaction>
</comment>
<comment type="biophysicochemical properties">
    <kinetics>
        <KM evidence="5">66 uM for mannitol phosphorylation</KM>
        <Vmax evidence="5">21.7 nmol/min/mg enzyme toward mannitol</Vmax>
    </kinetics>
</comment>
<comment type="subunit">
    <text evidence="7">Homodimer.</text>
</comment>
<comment type="subcellular location">
    <subcellularLocation>
        <location evidence="3 4 19">Cell inner membrane</location>
        <topology evidence="3 4 18">Multi-pass membrane protein</topology>
    </subcellularLocation>
</comment>
<comment type="induction">
    <text evidence="10">Induced by mannitol. Repressed by MltR.</text>
</comment>
<comment type="domain">
    <text evidence="3">The EIIC type-2 domain forms the PTS system translocation channel and contains the specific substrate-binding site.</text>
</comment>
<comment type="domain">
    <text evidence="2">The PTS EIIB type-2 domain is phosphorylated by phospho-EIIA on a cysteinyl residue. Then, it transfers the phosphoryl group to the sugar substrate concomitantly with the sugar uptake processed by the PTS EIIC type-2 domain.</text>
</comment>
<comment type="domain">
    <text evidence="1">The PTS EIIA type-2 domain is phosphorylated by phospho-HPr on a histidyl residue. Then, it transfers the phosphoryl group to the PTS EIIB type-2 domain.</text>
</comment>
<comment type="PTM">
    <text evidence="15">An intramolecular phosphotransfer takes places between His-554 and Cys-384.</text>
</comment>
<organism>
    <name type="scientific">Escherichia coli (strain K12)</name>
    <dbReference type="NCBI Taxonomy" id="83333"/>
    <lineage>
        <taxon>Bacteria</taxon>
        <taxon>Pseudomonadati</taxon>
        <taxon>Pseudomonadota</taxon>
        <taxon>Gammaproteobacteria</taxon>
        <taxon>Enterobacterales</taxon>
        <taxon>Enterobacteriaceae</taxon>
        <taxon>Escherichia</taxon>
    </lineage>
</organism>
<feature type="chain" id="PRO_0000186614" description="PTS system mannitol-specific EIICBA component">
    <location>
        <begin position="1"/>
        <end position="637"/>
    </location>
</feature>
<feature type="topological domain" description="Cytoplasmic" evidence="16">
    <location>
        <begin position="1"/>
        <end position="23"/>
    </location>
</feature>
<feature type="transmembrane region" description="Helical" evidence="16">
    <location>
        <begin position="24"/>
        <end position="45"/>
    </location>
</feature>
<feature type="topological domain" description="Periplasmic" evidence="16">
    <location>
        <begin position="46"/>
        <end position="49"/>
    </location>
</feature>
<feature type="transmembrane region" description="Helical" evidence="16">
    <location>
        <begin position="50"/>
        <end position="70"/>
    </location>
</feature>
<feature type="topological domain" description="Cytoplasmic" evidence="16">
    <location>
        <begin position="71"/>
        <end position="133"/>
    </location>
</feature>
<feature type="transmembrane region" description="Helical" evidence="16">
    <location>
        <begin position="134"/>
        <end position="155"/>
    </location>
</feature>
<feature type="topological domain" description="Periplasmic" evidence="16">
    <location>
        <begin position="156"/>
        <end position="164"/>
    </location>
</feature>
<feature type="transmembrane region" description="Helical" evidence="16">
    <location>
        <begin position="165"/>
        <end position="185"/>
    </location>
</feature>
<feature type="topological domain" description="Cytoplasmic" evidence="16">
    <location>
        <begin position="186"/>
        <end position="272"/>
    </location>
</feature>
<feature type="transmembrane region" description="Helical" evidence="16">
    <location>
        <begin position="273"/>
        <end position="292"/>
    </location>
</feature>
<feature type="topological domain" description="Periplasmic" evidence="16">
    <location>
        <begin position="293"/>
        <end position="312"/>
    </location>
</feature>
<feature type="transmembrane region" description="Helical" evidence="16">
    <location>
        <begin position="313"/>
        <end position="334"/>
    </location>
</feature>
<feature type="topological domain" description="Cytoplasmic" evidence="16">
    <location>
        <begin position="335"/>
        <end position="637"/>
    </location>
</feature>
<feature type="domain" description="PTS EIIC type-2" evidence="3">
    <location>
        <begin position="12"/>
        <end position="341"/>
    </location>
</feature>
<feature type="domain" description="PTS EIIB type-2" evidence="2">
    <location>
        <begin position="378"/>
        <end position="473"/>
    </location>
</feature>
<feature type="domain" description="PTS EIIA type-2" evidence="1">
    <location>
        <begin position="494"/>
        <end position="636"/>
    </location>
</feature>
<feature type="active site" description="Phosphocysteine intermediate; for EIIB activity" evidence="14 15">
    <location>
        <position position="384"/>
    </location>
</feature>
<feature type="active site" description="Tele-phosphohistidine intermediate; for EIIA activity" evidence="1 13 15 20">
    <location>
        <position position="554"/>
    </location>
</feature>
<feature type="site" description="Stabilizes the transition state in the phosphoryl transfer from HPr to EIIA" evidence="11">
    <location>
        <position position="538"/>
    </location>
</feature>
<feature type="modified residue" description="Phosphocysteine; by EIIA" evidence="2 6 14 15 17">
    <location>
        <position position="384"/>
    </location>
</feature>
<feature type="modified residue" description="Phosphohistidine; by HPr" evidence="6 13 15 17 20">
    <location>
        <position position="554"/>
    </location>
</feature>
<feature type="strand" evidence="22">
    <location>
        <begin position="379"/>
        <end position="382"/>
    </location>
</feature>
<feature type="strand" evidence="22">
    <location>
        <begin position="385"/>
        <end position="388"/>
    </location>
</feature>
<feature type="helix" evidence="22">
    <location>
        <begin position="389"/>
        <end position="404"/>
    </location>
</feature>
<feature type="strand" evidence="22">
    <location>
        <begin position="410"/>
        <end position="414"/>
    </location>
</feature>
<feature type="strand" evidence="22">
    <location>
        <begin position="425"/>
        <end position="430"/>
    </location>
</feature>
<feature type="helix" evidence="22">
    <location>
        <begin position="431"/>
        <end position="440"/>
    </location>
</feature>
<feature type="strand" evidence="22">
    <location>
        <begin position="444"/>
        <end position="450"/>
    </location>
</feature>
<feature type="helix" evidence="22">
    <location>
        <begin position="455"/>
        <end position="470"/>
    </location>
</feature>
<feature type="helix" evidence="21">
    <location>
        <begin position="498"/>
        <end position="500"/>
    </location>
</feature>
<feature type="helix" evidence="21">
    <location>
        <begin position="510"/>
        <end position="523"/>
    </location>
</feature>
<feature type="helix" evidence="21">
    <location>
        <begin position="530"/>
        <end position="541"/>
    </location>
</feature>
<feature type="strand" evidence="21">
    <location>
        <begin position="545"/>
        <end position="547"/>
    </location>
</feature>
<feature type="helix" evidence="21">
    <location>
        <begin position="557"/>
        <end position="562"/>
    </location>
</feature>
<feature type="strand" evidence="21">
    <location>
        <begin position="563"/>
        <end position="565"/>
    </location>
</feature>
<feature type="strand" evidence="21">
    <location>
        <begin position="567"/>
        <end position="578"/>
    </location>
</feature>
<feature type="strand" evidence="21">
    <location>
        <begin position="580"/>
        <end position="582"/>
    </location>
</feature>
<feature type="strand" evidence="21">
    <location>
        <begin position="586"/>
        <end position="594"/>
    </location>
</feature>
<feature type="turn" evidence="21">
    <location>
        <begin position="597"/>
        <end position="599"/>
    </location>
</feature>
<feature type="helix" evidence="21">
    <location>
        <begin position="600"/>
        <end position="610"/>
    </location>
</feature>
<feature type="helix" evidence="21">
    <location>
        <begin position="614"/>
        <end position="622"/>
    </location>
</feature>
<feature type="helix" evidence="21">
    <location>
        <begin position="626"/>
        <end position="632"/>
    </location>
</feature>
<feature type="turn" evidence="21">
    <location>
        <begin position="633"/>
        <end position="635"/>
    </location>
</feature>
<keyword id="KW-0002">3D-structure</keyword>
<keyword id="KW-0997">Cell inner membrane</keyword>
<keyword id="KW-1003">Cell membrane</keyword>
<keyword id="KW-0418">Kinase</keyword>
<keyword id="KW-0472">Membrane</keyword>
<keyword id="KW-0597">Phosphoprotein</keyword>
<keyword id="KW-0598">Phosphotransferase system</keyword>
<keyword id="KW-1185">Reference proteome</keyword>
<keyword id="KW-0762">Sugar transport</keyword>
<keyword id="KW-0808">Transferase</keyword>
<keyword id="KW-0812">Transmembrane</keyword>
<keyword id="KW-1133">Transmembrane helix</keyword>
<keyword id="KW-0813">Transport</keyword>
<sequence length="637" mass="67972">MSSDIKIKVQSFGRFLSNMVMPNIGAFIAWGIITALFIPTGWLPNETLAKLVGPMITYLLPLLIGYTGGKLVGGERGGVVGAITTMGVIVGADMPMFLGSMIAGPLGGWCIKHFDRWVDGKIKSGFEMLVNNFSAGIIGMILAILAFLGIGPIVEALSKMLAAGVNFMVVHDMLPLASIFVEPAKILFLNNAINHGIFSPLGIQQSHELGKSIFFLIEANPGPGMGVLLAYMFFGRGSAKQSAGGAAIIHFLGGIHEIYFPYVLMNPRLILAVILGGMTGVFTLTILGGGLVSPASPGSILAVLAMTPKGAYFANIAGVCAAMAVSFVVSAILLKTSKVKEEDDIEAATRRMQDMKAESKGASPLSAGDVTNDLSHVRKIIVACDAGMGSSAMGAGVLRKKIQDAGLSQISVTNSAINNLPPDVDLVITHRDLTERAMRQVPQAQHISLTNFLDSGLYTSLTERLVAAQRHTANEEKVKDSLKDSFDDSSANLFKLGAENIFLGRKAATKEEAIRFAGEQLVKGGYVEPEYVQAMLDREKLTPTYLGESIAVPHGTVEAKDRVLKTGVVFCQYPEGVRFGEEEDDIARLVIGIAARNNEHIQVITSLTNALDDESVIERLAHTTSVDEVLELLAGRK</sequence>
<accession>P00550</accession>
<accession>Q2M7R2</accession>